<comment type="function">
    <text evidence="1">Cleaves peptides in various proteins in a process that requires ATP hydrolysis. Has a chymotrypsin-like activity. Plays a major role in the degradation of misfolded proteins.</text>
</comment>
<comment type="catalytic activity">
    <reaction evidence="1">
        <text>Hydrolysis of proteins to small peptides in the presence of ATP and magnesium. alpha-casein is the usual test substrate. In the absence of ATP, only oligopeptides shorter than five residues are hydrolyzed (such as succinyl-Leu-Tyr-|-NHMec, and Leu-Tyr-Leu-|-Tyr-Trp, in which cleavage of the -Tyr-|-Leu- and -Tyr-|-Trp bonds also occurs).</text>
        <dbReference type="EC" id="3.4.21.92"/>
    </reaction>
</comment>
<comment type="subunit">
    <text evidence="1">Fourteen ClpP subunits assemble into 2 heptameric rings which stack back to back to give a disk-like structure with a central cavity, resembling the structure of eukaryotic proteasomes.</text>
</comment>
<comment type="subcellular location">
    <subcellularLocation>
        <location evidence="1">Cytoplasm</location>
    </subcellularLocation>
</comment>
<comment type="similarity">
    <text evidence="1">Belongs to the peptidase S14 family.</text>
</comment>
<reference key="1">
    <citation type="journal article" date="2004" name="Nucleic Acids Res.">
        <title>Comparative analysis of the Borrelia garinii genome.</title>
        <authorList>
            <person name="Gloeckner G."/>
            <person name="Lehmann R."/>
            <person name="Romualdi A."/>
            <person name="Pradella S."/>
            <person name="Schulte-Spechtel U."/>
            <person name="Schilhabel M."/>
            <person name="Wilske B."/>
            <person name="Suehnel J."/>
            <person name="Platzer M."/>
        </authorList>
    </citation>
    <scope>NUCLEOTIDE SEQUENCE [LARGE SCALE GENOMIC DNA]</scope>
    <source>
        <strain>ATCC BAA-2496 / DSM 23469 / PBi</strain>
    </source>
</reference>
<protein>
    <recommendedName>
        <fullName evidence="1">ATP-dependent Clp protease proteolytic subunit</fullName>
        <ecNumber evidence="1">3.4.21.92</ecNumber>
    </recommendedName>
    <alternativeName>
        <fullName evidence="1">Endopeptidase Clp</fullName>
    </alternativeName>
</protein>
<dbReference type="EC" id="3.4.21.92" evidence="1"/>
<dbReference type="EMBL" id="CP000013">
    <property type="protein sequence ID" value="AAU07459.1"/>
    <property type="molecule type" value="Genomic_DNA"/>
</dbReference>
<dbReference type="SMR" id="Q660R2"/>
<dbReference type="MEROPS" id="S14.001"/>
<dbReference type="KEGG" id="bga:BG0627"/>
<dbReference type="eggNOG" id="COG0740">
    <property type="taxonomic scope" value="Bacteria"/>
</dbReference>
<dbReference type="HOGENOM" id="CLU_058707_3_2_12"/>
<dbReference type="OrthoDB" id="9802800at2"/>
<dbReference type="Proteomes" id="UP000002276">
    <property type="component" value="Chromosome"/>
</dbReference>
<dbReference type="GO" id="GO:0005737">
    <property type="term" value="C:cytoplasm"/>
    <property type="evidence" value="ECO:0007669"/>
    <property type="project" value="UniProtKB-SubCell"/>
</dbReference>
<dbReference type="GO" id="GO:0009368">
    <property type="term" value="C:endopeptidase Clp complex"/>
    <property type="evidence" value="ECO:0007669"/>
    <property type="project" value="TreeGrafter"/>
</dbReference>
<dbReference type="GO" id="GO:0004176">
    <property type="term" value="F:ATP-dependent peptidase activity"/>
    <property type="evidence" value="ECO:0007669"/>
    <property type="project" value="InterPro"/>
</dbReference>
<dbReference type="GO" id="GO:0051117">
    <property type="term" value="F:ATPase binding"/>
    <property type="evidence" value="ECO:0007669"/>
    <property type="project" value="TreeGrafter"/>
</dbReference>
<dbReference type="GO" id="GO:0004252">
    <property type="term" value="F:serine-type endopeptidase activity"/>
    <property type="evidence" value="ECO:0007669"/>
    <property type="project" value="UniProtKB-UniRule"/>
</dbReference>
<dbReference type="GO" id="GO:0006515">
    <property type="term" value="P:protein quality control for misfolded or incompletely synthesized proteins"/>
    <property type="evidence" value="ECO:0007669"/>
    <property type="project" value="TreeGrafter"/>
</dbReference>
<dbReference type="CDD" id="cd07017">
    <property type="entry name" value="S14_ClpP_2"/>
    <property type="match status" value="1"/>
</dbReference>
<dbReference type="FunFam" id="3.90.226.10:FF:000001">
    <property type="entry name" value="ATP-dependent Clp protease proteolytic subunit"/>
    <property type="match status" value="1"/>
</dbReference>
<dbReference type="Gene3D" id="3.90.226.10">
    <property type="entry name" value="2-enoyl-CoA Hydratase, Chain A, domain 1"/>
    <property type="match status" value="1"/>
</dbReference>
<dbReference type="HAMAP" id="MF_00444">
    <property type="entry name" value="ClpP"/>
    <property type="match status" value="1"/>
</dbReference>
<dbReference type="InterPro" id="IPR001907">
    <property type="entry name" value="ClpP"/>
</dbReference>
<dbReference type="InterPro" id="IPR029045">
    <property type="entry name" value="ClpP/crotonase-like_dom_sf"/>
</dbReference>
<dbReference type="InterPro" id="IPR023562">
    <property type="entry name" value="ClpP/TepA"/>
</dbReference>
<dbReference type="InterPro" id="IPR033135">
    <property type="entry name" value="ClpP_His_AS"/>
</dbReference>
<dbReference type="InterPro" id="IPR018215">
    <property type="entry name" value="ClpP_Ser_AS"/>
</dbReference>
<dbReference type="NCBIfam" id="TIGR00493">
    <property type="entry name" value="clpP"/>
    <property type="match status" value="1"/>
</dbReference>
<dbReference type="NCBIfam" id="NF001368">
    <property type="entry name" value="PRK00277.1"/>
    <property type="match status" value="1"/>
</dbReference>
<dbReference type="NCBIfam" id="NF009205">
    <property type="entry name" value="PRK12553.1"/>
    <property type="match status" value="1"/>
</dbReference>
<dbReference type="PANTHER" id="PTHR10381">
    <property type="entry name" value="ATP-DEPENDENT CLP PROTEASE PROTEOLYTIC SUBUNIT"/>
    <property type="match status" value="1"/>
</dbReference>
<dbReference type="PANTHER" id="PTHR10381:SF70">
    <property type="entry name" value="ATP-DEPENDENT CLP PROTEASE PROTEOLYTIC SUBUNIT"/>
    <property type="match status" value="1"/>
</dbReference>
<dbReference type="Pfam" id="PF00574">
    <property type="entry name" value="CLP_protease"/>
    <property type="match status" value="1"/>
</dbReference>
<dbReference type="PRINTS" id="PR00127">
    <property type="entry name" value="CLPPROTEASEP"/>
</dbReference>
<dbReference type="SUPFAM" id="SSF52096">
    <property type="entry name" value="ClpP/crotonase"/>
    <property type="match status" value="1"/>
</dbReference>
<dbReference type="PROSITE" id="PS00382">
    <property type="entry name" value="CLP_PROTEASE_HIS"/>
    <property type="match status" value="1"/>
</dbReference>
<dbReference type="PROSITE" id="PS00381">
    <property type="entry name" value="CLP_PROTEASE_SER"/>
    <property type="match status" value="1"/>
</dbReference>
<proteinExistence type="inferred from homology"/>
<evidence type="ECO:0000255" key="1">
    <source>
        <dbReference type="HAMAP-Rule" id="MF_00444"/>
    </source>
</evidence>
<name>CLPP_BORGP</name>
<organism>
    <name type="scientific">Borrelia garinii subsp. bavariensis (strain ATCC BAA-2496 / DSM 23469 / PBi)</name>
    <name type="common">Borreliella bavariensis</name>
    <dbReference type="NCBI Taxonomy" id="290434"/>
    <lineage>
        <taxon>Bacteria</taxon>
        <taxon>Pseudomonadati</taxon>
        <taxon>Spirochaetota</taxon>
        <taxon>Spirochaetia</taxon>
        <taxon>Spirochaetales</taxon>
        <taxon>Borreliaceae</taxon>
        <taxon>Borreliella</taxon>
    </lineage>
</organism>
<keyword id="KW-0963">Cytoplasm</keyword>
<keyword id="KW-0378">Hydrolase</keyword>
<keyword id="KW-0645">Protease</keyword>
<keyword id="KW-0720">Serine protease</keyword>
<gene>
    <name evidence="1" type="primary">clpP</name>
    <name type="ordered locus">BG0627</name>
</gene>
<accession>Q660R2</accession>
<sequence length="194" mass="21734">MHNLIPTVIEHTGNYERVFDIYSRLLRERIIFLSGEINDLKADTVIAQLLFLESEDSNKDIYLYLNSPGGSITAGLAIYDTMQYIKPDVRTICIGQAASMGAFLLAGGAKGKRESLAYSRIMIHQPWGGISGQASDINIQANEILRLKKLIIDIMSNQIGIDKEKLALDMERDYFMTSNDALKYGLIDSILVRE</sequence>
<feature type="chain" id="PRO_0000179511" description="ATP-dependent Clp protease proteolytic subunit">
    <location>
        <begin position="1"/>
        <end position="194"/>
    </location>
</feature>
<feature type="active site" description="Nucleophile" evidence="1">
    <location>
        <position position="99"/>
    </location>
</feature>
<feature type="active site" evidence="1">
    <location>
        <position position="124"/>
    </location>
</feature>